<comment type="function">
    <text evidence="3">Response regulator in the two-component regulatory system ComP/ComA involved in a major quorum response pathway that regulates the development of genetic competence. Regulates directly the expression of over 20 genes, including genes of the srfA operon, degQ, rapA, rapC, rapE, rapF, etc. Regulates indirectly, through the regulation of comK transcription, the expression of late competence genes.</text>
</comment>
<comment type="interaction">
    <interactant intactId="EBI-6418022">
        <id>P14204</id>
    </interactant>
    <interactant intactId="EBI-15961797">
        <id>P71002</id>
        <label>rapF</label>
    </interactant>
    <organismsDiffer>false</organismsDiffer>
    <experiments>5</experiments>
</comment>
<comment type="subcellular location">
    <subcellularLocation>
        <location evidence="4">Cytoplasm</location>
    </subcellularLocation>
</comment>
<comment type="PTM">
    <text>Phosphorylated by ComP.</text>
</comment>
<reference key="1">
    <citation type="journal article" date="1989" name="J. Bacteriol.">
        <title>Sequence and transcription mapping of Bacillus subtilis competence genes comB and comA, one of which is related to a family of bacterial regulatory determinants.</title>
        <authorList>
            <person name="Weinrauch Y."/>
            <person name="Guillen N."/>
            <person name="Dubnau D."/>
        </authorList>
    </citation>
    <scope>NUCLEOTIDE SEQUENCE [GENOMIC DNA]</scope>
</reference>
<reference key="2">
    <citation type="journal article" date="1997" name="Microbiology">
        <title>Analysis of the Bacillus subtilis genome: cloning and nucleotide sequence of a 62 kb region between 275 degrees (rrnB) and 284 degrees (pai).</title>
        <authorList>
            <person name="Oudega B."/>
            <person name="Koningstein G."/>
            <person name="Rodrigues L."/>
            <person name="de Sales Ramon M."/>
            <person name="Hilbert H."/>
            <person name="Duesterhoeft A."/>
            <person name="Pohl T.M."/>
            <person name="Weitzenegger T."/>
        </authorList>
    </citation>
    <scope>NUCLEOTIDE SEQUENCE [GENOMIC DNA]</scope>
    <source>
        <strain>168</strain>
    </source>
</reference>
<reference key="3">
    <citation type="journal article" date="1997" name="Nature">
        <title>The complete genome sequence of the Gram-positive bacterium Bacillus subtilis.</title>
        <authorList>
            <person name="Kunst F."/>
            <person name="Ogasawara N."/>
            <person name="Moszer I."/>
            <person name="Albertini A.M."/>
            <person name="Alloni G."/>
            <person name="Azevedo V."/>
            <person name="Bertero M.G."/>
            <person name="Bessieres P."/>
            <person name="Bolotin A."/>
            <person name="Borchert S."/>
            <person name="Borriss R."/>
            <person name="Boursier L."/>
            <person name="Brans A."/>
            <person name="Braun M."/>
            <person name="Brignell S.C."/>
            <person name="Bron S."/>
            <person name="Brouillet S."/>
            <person name="Bruschi C.V."/>
            <person name="Caldwell B."/>
            <person name="Capuano V."/>
            <person name="Carter N.M."/>
            <person name="Choi S.-K."/>
            <person name="Codani J.-J."/>
            <person name="Connerton I.F."/>
            <person name="Cummings N.J."/>
            <person name="Daniel R.A."/>
            <person name="Denizot F."/>
            <person name="Devine K.M."/>
            <person name="Duesterhoeft A."/>
            <person name="Ehrlich S.D."/>
            <person name="Emmerson P.T."/>
            <person name="Entian K.-D."/>
            <person name="Errington J."/>
            <person name="Fabret C."/>
            <person name="Ferrari E."/>
            <person name="Foulger D."/>
            <person name="Fritz C."/>
            <person name="Fujita M."/>
            <person name="Fujita Y."/>
            <person name="Fuma S."/>
            <person name="Galizzi A."/>
            <person name="Galleron N."/>
            <person name="Ghim S.-Y."/>
            <person name="Glaser P."/>
            <person name="Goffeau A."/>
            <person name="Golightly E.J."/>
            <person name="Grandi G."/>
            <person name="Guiseppi G."/>
            <person name="Guy B.J."/>
            <person name="Haga K."/>
            <person name="Haiech J."/>
            <person name="Harwood C.R."/>
            <person name="Henaut A."/>
            <person name="Hilbert H."/>
            <person name="Holsappel S."/>
            <person name="Hosono S."/>
            <person name="Hullo M.-F."/>
            <person name="Itaya M."/>
            <person name="Jones L.-M."/>
            <person name="Joris B."/>
            <person name="Karamata D."/>
            <person name="Kasahara Y."/>
            <person name="Klaerr-Blanchard M."/>
            <person name="Klein C."/>
            <person name="Kobayashi Y."/>
            <person name="Koetter P."/>
            <person name="Koningstein G."/>
            <person name="Krogh S."/>
            <person name="Kumano M."/>
            <person name="Kurita K."/>
            <person name="Lapidus A."/>
            <person name="Lardinois S."/>
            <person name="Lauber J."/>
            <person name="Lazarevic V."/>
            <person name="Lee S.-M."/>
            <person name="Levine A."/>
            <person name="Liu H."/>
            <person name="Masuda S."/>
            <person name="Mauel C."/>
            <person name="Medigue C."/>
            <person name="Medina N."/>
            <person name="Mellado R.P."/>
            <person name="Mizuno M."/>
            <person name="Moestl D."/>
            <person name="Nakai S."/>
            <person name="Noback M."/>
            <person name="Noone D."/>
            <person name="O'Reilly M."/>
            <person name="Ogawa K."/>
            <person name="Ogiwara A."/>
            <person name="Oudega B."/>
            <person name="Park S.-H."/>
            <person name="Parro V."/>
            <person name="Pohl T.M."/>
            <person name="Portetelle D."/>
            <person name="Porwollik S."/>
            <person name="Prescott A.M."/>
            <person name="Presecan E."/>
            <person name="Pujic P."/>
            <person name="Purnelle B."/>
            <person name="Rapoport G."/>
            <person name="Rey M."/>
            <person name="Reynolds S."/>
            <person name="Rieger M."/>
            <person name="Rivolta C."/>
            <person name="Rocha E."/>
            <person name="Roche B."/>
            <person name="Rose M."/>
            <person name="Sadaie Y."/>
            <person name="Sato T."/>
            <person name="Scanlan E."/>
            <person name="Schleich S."/>
            <person name="Schroeter R."/>
            <person name="Scoffone F."/>
            <person name="Sekiguchi J."/>
            <person name="Sekowska A."/>
            <person name="Seror S.J."/>
            <person name="Serror P."/>
            <person name="Shin B.-S."/>
            <person name="Soldo B."/>
            <person name="Sorokin A."/>
            <person name="Tacconi E."/>
            <person name="Takagi T."/>
            <person name="Takahashi H."/>
            <person name="Takemaru K."/>
            <person name="Takeuchi M."/>
            <person name="Tamakoshi A."/>
            <person name="Tanaka T."/>
            <person name="Terpstra P."/>
            <person name="Tognoni A."/>
            <person name="Tosato V."/>
            <person name="Uchiyama S."/>
            <person name="Vandenbol M."/>
            <person name="Vannier F."/>
            <person name="Vassarotti A."/>
            <person name="Viari A."/>
            <person name="Wambutt R."/>
            <person name="Wedler E."/>
            <person name="Wedler H."/>
            <person name="Weitzenegger T."/>
            <person name="Winters P."/>
            <person name="Wipat A."/>
            <person name="Yamamoto H."/>
            <person name="Yamane K."/>
            <person name="Yasumoto K."/>
            <person name="Yata K."/>
            <person name="Yoshida K."/>
            <person name="Yoshikawa H.-F."/>
            <person name="Zumstein E."/>
            <person name="Yoshikawa H."/>
            <person name="Danchin A."/>
        </authorList>
    </citation>
    <scope>NUCLEOTIDE SEQUENCE [LARGE SCALE GENOMIC DNA]</scope>
    <source>
        <strain>168</strain>
    </source>
</reference>
<reference key="4">
    <citation type="journal article" date="2005" name="Mol. Microbiol.">
        <title>Conservation of genes and processes controlled by the quorum response in bacteria: characterization of genes controlled by the quorum-sensing transcription factor ComA in Bacillus subtilis.</title>
        <authorList>
            <person name="Comella N."/>
            <person name="Grossman A.D."/>
        </authorList>
    </citation>
    <scope>FUNCTION</scope>
</reference>
<name>CMPA_BACSU</name>
<dbReference type="EMBL" id="AH000865">
    <property type="protein sequence ID" value="AAA22320.1"/>
    <property type="molecule type" value="Genomic_DNA"/>
</dbReference>
<dbReference type="EMBL" id="Z93932">
    <property type="protein sequence ID" value="CAB07904.1"/>
    <property type="molecule type" value="Genomic_DNA"/>
</dbReference>
<dbReference type="EMBL" id="AL009126">
    <property type="protein sequence ID" value="CAB15156.1"/>
    <property type="molecule type" value="Genomic_DNA"/>
</dbReference>
<dbReference type="PIR" id="A33591">
    <property type="entry name" value="RGBSCA"/>
</dbReference>
<dbReference type="RefSeq" id="NP_391046.1">
    <property type="nucleotide sequence ID" value="NC_000964.3"/>
</dbReference>
<dbReference type="RefSeq" id="WP_003220716.1">
    <property type="nucleotide sequence ID" value="NZ_OZ025638.1"/>
</dbReference>
<dbReference type="PDB" id="2KRF">
    <property type="method" value="NMR"/>
    <property type="chains" value="A/B=146-214"/>
</dbReference>
<dbReference type="PDB" id="3ULQ">
    <property type="method" value="X-ray"/>
    <property type="resolution" value="2.30 A"/>
    <property type="chains" value="B=146-214"/>
</dbReference>
<dbReference type="PDBsum" id="2KRF"/>
<dbReference type="PDBsum" id="3ULQ"/>
<dbReference type="BMRB" id="P14204"/>
<dbReference type="SMR" id="P14204"/>
<dbReference type="DIP" id="DIP-59430N"/>
<dbReference type="FunCoup" id="P14204">
    <property type="interactions" value="177"/>
</dbReference>
<dbReference type="IntAct" id="P14204">
    <property type="interactions" value="2"/>
</dbReference>
<dbReference type="STRING" id="224308.BSU31680"/>
<dbReference type="PaxDb" id="224308-BSU31680"/>
<dbReference type="EnsemblBacteria" id="CAB15156">
    <property type="protein sequence ID" value="CAB15156"/>
    <property type="gene ID" value="BSU_31680"/>
</dbReference>
<dbReference type="GeneID" id="86872294"/>
<dbReference type="GeneID" id="937179"/>
<dbReference type="KEGG" id="bsu:BSU31680"/>
<dbReference type="PATRIC" id="fig|224308.179.peg.3433"/>
<dbReference type="eggNOG" id="COG2197">
    <property type="taxonomic scope" value="Bacteria"/>
</dbReference>
<dbReference type="InParanoid" id="P14204"/>
<dbReference type="OrthoDB" id="118459at2"/>
<dbReference type="PhylomeDB" id="P14204"/>
<dbReference type="BioCyc" id="BSUB:BSU31680-MONOMER"/>
<dbReference type="EvolutionaryTrace" id="P14204"/>
<dbReference type="PRO" id="PR:P14204"/>
<dbReference type="Proteomes" id="UP000001570">
    <property type="component" value="Chromosome"/>
</dbReference>
<dbReference type="GO" id="GO:0005737">
    <property type="term" value="C:cytoplasm"/>
    <property type="evidence" value="ECO:0007669"/>
    <property type="project" value="UniProtKB-SubCell"/>
</dbReference>
<dbReference type="GO" id="GO:0003677">
    <property type="term" value="F:DNA binding"/>
    <property type="evidence" value="ECO:0007669"/>
    <property type="project" value="UniProtKB-KW"/>
</dbReference>
<dbReference type="GO" id="GO:0030420">
    <property type="term" value="P:establishment of competence for transformation"/>
    <property type="evidence" value="ECO:0007669"/>
    <property type="project" value="UniProtKB-KW"/>
</dbReference>
<dbReference type="GO" id="GO:0000160">
    <property type="term" value="P:phosphorelay signal transduction system"/>
    <property type="evidence" value="ECO:0007669"/>
    <property type="project" value="UniProtKB-KW"/>
</dbReference>
<dbReference type="GO" id="GO:0006355">
    <property type="term" value="P:regulation of DNA-templated transcription"/>
    <property type="evidence" value="ECO:0007669"/>
    <property type="project" value="InterPro"/>
</dbReference>
<dbReference type="CDD" id="cd06170">
    <property type="entry name" value="LuxR_C_like"/>
    <property type="match status" value="1"/>
</dbReference>
<dbReference type="CDD" id="cd17535">
    <property type="entry name" value="REC_NarL-like"/>
    <property type="match status" value="1"/>
</dbReference>
<dbReference type="Gene3D" id="3.40.50.2300">
    <property type="match status" value="1"/>
</dbReference>
<dbReference type="Gene3D" id="1.10.10.10">
    <property type="entry name" value="Winged helix-like DNA-binding domain superfamily/Winged helix DNA-binding domain"/>
    <property type="match status" value="1"/>
</dbReference>
<dbReference type="InterPro" id="IPR011006">
    <property type="entry name" value="CheY-like_superfamily"/>
</dbReference>
<dbReference type="InterPro" id="IPR016032">
    <property type="entry name" value="Sig_transdc_resp-reg_C-effctor"/>
</dbReference>
<dbReference type="InterPro" id="IPR001789">
    <property type="entry name" value="Sig_transdc_resp-reg_receiver"/>
</dbReference>
<dbReference type="InterPro" id="IPR000792">
    <property type="entry name" value="Tscrpt_reg_LuxR_C"/>
</dbReference>
<dbReference type="InterPro" id="IPR039420">
    <property type="entry name" value="WalR-like"/>
</dbReference>
<dbReference type="InterPro" id="IPR036388">
    <property type="entry name" value="WH-like_DNA-bd_sf"/>
</dbReference>
<dbReference type="PANTHER" id="PTHR43214:SF1">
    <property type="entry name" value="TRANSCRIPTIONAL REGULATORY PROTEIN COMA"/>
    <property type="match status" value="1"/>
</dbReference>
<dbReference type="PANTHER" id="PTHR43214">
    <property type="entry name" value="TWO-COMPONENT RESPONSE REGULATOR"/>
    <property type="match status" value="1"/>
</dbReference>
<dbReference type="Pfam" id="PF00196">
    <property type="entry name" value="GerE"/>
    <property type="match status" value="1"/>
</dbReference>
<dbReference type="Pfam" id="PF00072">
    <property type="entry name" value="Response_reg"/>
    <property type="match status" value="1"/>
</dbReference>
<dbReference type="PRINTS" id="PR00038">
    <property type="entry name" value="HTHLUXR"/>
</dbReference>
<dbReference type="SMART" id="SM00421">
    <property type="entry name" value="HTH_LUXR"/>
    <property type="match status" value="1"/>
</dbReference>
<dbReference type="SMART" id="SM00448">
    <property type="entry name" value="REC"/>
    <property type="match status" value="1"/>
</dbReference>
<dbReference type="SUPFAM" id="SSF46894">
    <property type="entry name" value="C-terminal effector domain of the bipartite response regulators"/>
    <property type="match status" value="1"/>
</dbReference>
<dbReference type="SUPFAM" id="SSF52172">
    <property type="entry name" value="CheY-like"/>
    <property type="match status" value="1"/>
</dbReference>
<dbReference type="PROSITE" id="PS00622">
    <property type="entry name" value="HTH_LUXR_1"/>
    <property type="match status" value="1"/>
</dbReference>
<dbReference type="PROSITE" id="PS50043">
    <property type="entry name" value="HTH_LUXR_2"/>
    <property type="match status" value="1"/>
</dbReference>
<dbReference type="PROSITE" id="PS50110">
    <property type="entry name" value="RESPONSE_REGULATORY"/>
    <property type="match status" value="1"/>
</dbReference>
<feature type="chain" id="PRO_0000081075" description="Transcriptional regulatory protein ComA">
    <location>
        <begin position="1"/>
        <end position="214"/>
    </location>
</feature>
<feature type="domain" description="Response regulatory" evidence="1">
    <location>
        <begin position="3"/>
        <end position="121"/>
    </location>
</feature>
<feature type="domain" description="HTH luxR-type" evidence="2">
    <location>
        <begin position="147"/>
        <end position="212"/>
    </location>
</feature>
<feature type="DNA-binding region" description="H-T-H motif" evidence="2">
    <location>
        <begin position="171"/>
        <end position="190"/>
    </location>
</feature>
<feature type="modified residue" description="4-aspartylphosphate" evidence="1">
    <location>
        <position position="55"/>
    </location>
</feature>
<feature type="strand" evidence="5">
    <location>
        <begin position="150"/>
        <end position="154"/>
    </location>
</feature>
<feature type="helix" evidence="6">
    <location>
        <begin position="156"/>
        <end position="166"/>
    </location>
</feature>
<feature type="helix" evidence="6">
    <location>
        <begin position="171"/>
        <end position="178"/>
    </location>
</feature>
<feature type="helix" evidence="6">
    <location>
        <begin position="182"/>
        <end position="195"/>
    </location>
</feature>
<feature type="helix" evidence="6">
    <location>
        <begin position="201"/>
        <end position="208"/>
    </location>
</feature>
<accession>P14204</accession>
<keyword id="KW-0002">3D-structure</keyword>
<keyword id="KW-0010">Activator</keyword>
<keyword id="KW-0178">Competence</keyword>
<keyword id="KW-0963">Cytoplasm</keyword>
<keyword id="KW-0238">DNA-binding</keyword>
<keyword id="KW-0597">Phosphoprotein</keyword>
<keyword id="KW-1185">Reference proteome</keyword>
<keyword id="KW-0804">Transcription</keyword>
<keyword id="KW-0805">Transcription regulation</keyword>
<keyword id="KW-0902">Two-component regulatory system</keyword>
<sequence>MKKILVIDDHPAVMEGTKTILETDSNLSVDCLSPEPSEQFIKQHDFSSYDLILMDLNLGGEVNGMELSKQILQENPHCKIIVYTGYEVEDYFEEAIRAGLHGAISKTESKEKITQYIYHVLNGEILVDFAYFKQLMTQQKTKPAPSSQKEQDVLTPRECLILQEVEKGFTNQEIADALHLSKRSIEYSLTSIFNKLNVGSRTEAVLIAKSDGVL</sequence>
<gene>
    <name type="primary">comA</name>
    <name type="synonym">comA1</name>
    <name type="synonym">comAA</name>
    <name type="ordered locus">BSU31680</name>
</gene>
<evidence type="ECO:0000255" key="1">
    <source>
        <dbReference type="PROSITE-ProRule" id="PRU00169"/>
    </source>
</evidence>
<evidence type="ECO:0000255" key="2">
    <source>
        <dbReference type="PROSITE-ProRule" id="PRU00411"/>
    </source>
</evidence>
<evidence type="ECO:0000269" key="3">
    <source>
    </source>
</evidence>
<evidence type="ECO:0000305" key="4"/>
<evidence type="ECO:0007829" key="5">
    <source>
        <dbReference type="PDB" id="2KRF"/>
    </source>
</evidence>
<evidence type="ECO:0007829" key="6">
    <source>
        <dbReference type="PDB" id="3ULQ"/>
    </source>
</evidence>
<organism>
    <name type="scientific">Bacillus subtilis (strain 168)</name>
    <dbReference type="NCBI Taxonomy" id="224308"/>
    <lineage>
        <taxon>Bacteria</taxon>
        <taxon>Bacillati</taxon>
        <taxon>Bacillota</taxon>
        <taxon>Bacilli</taxon>
        <taxon>Bacillales</taxon>
        <taxon>Bacillaceae</taxon>
        <taxon>Bacillus</taxon>
    </lineage>
</organism>
<proteinExistence type="evidence at protein level"/>
<protein>
    <recommendedName>
        <fullName>Transcriptional regulatory protein ComA</fullName>
    </recommendedName>
    <alternativeName>
        <fullName>Competence protein A</fullName>
    </alternativeName>
</protein>